<evidence type="ECO:0000250" key="1"/>
<evidence type="ECO:0000255" key="2">
    <source>
        <dbReference type="PROSITE-ProRule" id="PRU00981"/>
    </source>
</evidence>
<evidence type="ECO:0000269" key="3">
    <source>
    </source>
</evidence>
<evidence type="ECO:0000269" key="4">
    <source>
    </source>
</evidence>
<evidence type="ECO:0000269" key="5">
    <source>
    </source>
</evidence>
<evidence type="ECO:0000269" key="6">
    <source>
    </source>
</evidence>
<evidence type="ECO:0000269" key="7">
    <source>
    </source>
</evidence>
<evidence type="ECO:0000269" key="8">
    <source>
    </source>
</evidence>
<evidence type="ECO:0000269" key="9">
    <source ref="4"/>
</evidence>
<evidence type="ECO:0000269" key="10">
    <source ref="7"/>
</evidence>
<evidence type="ECO:0000305" key="11"/>
<evidence type="ECO:0007829" key="12">
    <source>
        <dbReference type="PDB" id="2LFH"/>
    </source>
</evidence>
<feature type="chain" id="PRO_0000127247" description="DNA-binding protein inhibitor ID-3">
    <location>
        <begin position="1"/>
        <end position="119"/>
    </location>
</feature>
<feature type="domain" description="bHLH" evidence="2">
    <location>
        <begin position="28"/>
        <end position="80"/>
    </location>
</feature>
<feature type="sequence variant" id="VAR_016122" description="In dbSNP:rs11574." evidence="3 4 5 7 8 9 10">
    <original>T</original>
    <variation>A</variation>
    <location>
        <position position="105"/>
    </location>
</feature>
<feature type="sequence variant" id="VAR_030739" description="In dbSNP:rs11542317.">
    <original>S</original>
    <variation>A</variation>
    <location>
        <position position="111"/>
    </location>
</feature>
<feature type="strand" evidence="12">
    <location>
        <begin position="40"/>
        <end position="42"/>
    </location>
</feature>
<feature type="helix" evidence="12">
    <location>
        <begin position="43"/>
        <end position="54"/>
    </location>
</feature>
<feature type="helix" evidence="12">
    <location>
        <begin position="66"/>
        <end position="81"/>
    </location>
</feature>
<comment type="function">
    <text evidence="8">Transcriptional regulator (lacking a basic DNA binding domain) which negatively regulates the basic helix-loop-helix (bHLH) transcription factors by forming heterodimers and inhibiting their DNA binding and transcriptional activity. Implicated in regulating a variety of cellular processes, including cellular growth, senescence, differentiation, apoptosis, angiogenesis, and neoplastic transformation. Involved in myogenesis by inhibiting skeletal muscle and cardiac myocyte differentiation and promoting muscle precursor cells proliferation. Inhibits the binding of E2A-containing protein complexes to muscle creatine kinase E-box enhancer. Regulates the circadian clock by repressing the transcriptional activator activity of the CLOCK-BMAL1 heterodimer.</text>
</comment>
<comment type="subunit">
    <text evidence="1 6">Homodimer, and heterodimer with other HLH proteins. Interacts with COPS5 and COPS7A. Interacts with IFI204. Interacts with GATA4 and NKX2-5. Interacts with ANKRD2; both proteins cooperate in myoblast differentiation (By similarity). Interacts with CLOCK and BMAL1.</text>
</comment>
<comment type="interaction">
    <interactant intactId="EBI-1387094">
        <id>Q02535</id>
    </interactant>
    <interactant intactId="EBI-11954519">
        <id>Q49AR9</id>
        <label>ANKS1A</label>
    </interactant>
    <organismsDiffer>false</organismsDiffer>
    <experiments>3</experiments>
</comment>
<comment type="interaction">
    <interactant intactId="EBI-1387094">
        <id>Q02535</id>
    </interactant>
    <interactant intactId="EBI-12006120">
        <id>A0A087WZT3</id>
        <label>BOLA2-SMG1P6</label>
    </interactant>
    <organismsDiffer>false</organismsDiffer>
    <experiments>3</experiments>
</comment>
<comment type="interaction">
    <interactant intactId="EBI-1387094">
        <id>Q02535</id>
    </interactant>
    <interactant intactId="EBI-7317823">
        <id>Q6P5X5</id>
        <label>C22orf39</label>
    </interactant>
    <organismsDiffer>false</organismsDiffer>
    <experiments>3</experiments>
</comment>
<comment type="interaction">
    <interactant intactId="EBI-1387094">
        <id>Q02535</id>
    </interactant>
    <interactant intactId="EBI-10192698">
        <id>Q02930-3</id>
        <label>CREB5</label>
    </interactant>
    <organismsDiffer>false</organismsDiffer>
    <experiments>5</experiments>
</comment>
<comment type="interaction">
    <interactant intactId="EBI-1387094">
        <id>Q02535</id>
    </interactant>
    <interactant intactId="EBI-10976677">
        <id>G5E9A7</id>
        <label>DMWD</label>
    </interactant>
    <organismsDiffer>false</organismsDiffer>
    <experiments>3</experiments>
</comment>
<comment type="interaction">
    <interactant intactId="EBI-1387094">
        <id>Q02535</id>
    </interactant>
    <interactant intactId="EBI-701903">
        <id>Q14192</id>
        <label>FHL2</label>
    </interactant>
    <organismsDiffer>false</organismsDiffer>
    <experiments>4</experiments>
</comment>
<comment type="interaction">
    <interactant intactId="EBI-1387094">
        <id>Q02535</id>
    </interactant>
    <interactant intactId="EBI-725515">
        <id>O43559</id>
        <label>FRS3</label>
    </interactant>
    <organismsDiffer>false</organismsDiffer>
    <experiments>3</experiments>
</comment>
<comment type="interaction">
    <interactant intactId="EBI-1387094">
        <id>Q02535</id>
    </interactant>
    <interactant intactId="EBI-11978177">
        <id>Q96NT3-2</id>
        <label>GUCD1</label>
    </interactant>
    <organismsDiffer>false</organismsDiffer>
    <experiments>3</experiments>
</comment>
<comment type="interaction">
    <interactant intactId="EBI-1387094">
        <id>Q02535</id>
    </interactant>
    <interactant intactId="EBI-740785">
        <id>P49639</id>
        <label>HOXA1</label>
    </interactant>
    <organismsDiffer>false</organismsDiffer>
    <experiments>3</experiments>
</comment>
<comment type="interaction">
    <interactant intactId="EBI-1387094">
        <id>Q02535</id>
    </interactant>
    <interactant intactId="EBI-399080">
        <id>Q92993</id>
        <label>KAT5</label>
    </interactant>
    <organismsDiffer>false</organismsDiffer>
    <experiments>3</experiments>
</comment>
<comment type="interaction">
    <interactant intactId="EBI-1387094">
        <id>Q02535</id>
    </interactant>
    <interactant intactId="EBI-3957672">
        <id>Q6PEX3</id>
        <label>KRTAP26-1</label>
    </interactant>
    <organismsDiffer>false</organismsDiffer>
    <experiments>3</experiments>
</comment>
<comment type="interaction">
    <interactant intactId="EBI-1387094">
        <id>Q02535</id>
    </interactant>
    <interactant intactId="EBI-2798728">
        <id>P61968</id>
        <label>LMO4</label>
    </interactant>
    <organismsDiffer>false</organismsDiffer>
    <experiments>3</experiments>
</comment>
<comment type="interaction">
    <interactant intactId="EBI-1387094">
        <id>Q02535</id>
    </interactant>
    <interactant intactId="EBI-11991020">
        <id>A6NI15</id>
        <label>MSGN1</label>
    </interactant>
    <organismsDiffer>false</organismsDiffer>
    <experiments>3</experiments>
</comment>
<comment type="interaction">
    <interactant intactId="EBI-1387094">
        <id>Q02535</id>
    </interactant>
    <interactant intactId="EBI-17491620">
        <id>P13349</id>
        <label>MYF5</label>
    </interactant>
    <organismsDiffer>false</organismsDiffer>
    <experiments>3</experiments>
</comment>
<comment type="interaction">
    <interactant intactId="EBI-1387094">
        <id>Q02535</id>
    </interactant>
    <interactant intactId="EBI-1056089">
        <id>P51149</id>
        <label>RAB7A</label>
    </interactant>
    <organismsDiffer>false</organismsDiffer>
    <experiments>3</experiments>
</comment>
<comment type="interaction">
    <interactant intactId="EBI-1387094">
        <id>Q02535</id>
    </interactant>
    <interactant intactId="EBI-727004">
        <id>O00560</id>
        <label>SDCBP</label>
    </interactant>
    <organismsDiffer>false</organismsDiffer>
    <experiments>3</experiments>
</comment>
<comment type="interaction">
    <interactant intactId="EBI-1387094">
        <id>Q02535</id>
    </interactant>
    <interactant intactId="EBI-5235340">
        <id>Q7Z699</id>
        <label>SPRED1</label>
    </interactant>
    <organismsDiffer>false</organismsDiffer>
    <experiments>3</experiments>
</comment>
<comment type="interaction">
    <interactant intactId="EBI-1387094">
        <id>Q02535</id>
    </interactant>
    <interactant intactId="EBI-722877">
        <id>Q99081</id>
        <label>TCF12</label>
    </interactant>
    <organismsDiffer>false</organismsDiffer>
    <experiments>5</experiments>
</comment>
<comment type="interaction">
    <interactant intactId="EBI-1387094">
        <id>Q02535</id>
    </interactant>
    <interactant intactId="EBI-11952764">
        <id>Q99081-3</id>
        <label>TCF12</label>
    </interactant>
    <organismsDiffer>false</organismsDiffer>
    <experiments>4</experiments>
</comment>
<comment type="interaction">
    <interactant intactId="EBI-1387094">
        <id>Q02535</id>
    </interactant>
    <interactant intactId="EBI-769630">
        <id>P15923</id>
        <label>TCF3</label>
    </interactant>
    <organismsDiffer>false</organismsDiffer>
    <experiments>3</experiments>
</comment>
<comment type="interaction">
    <interactant intactId="EBI-1387094">
        <id>Q02535</id>
    </interactant>
    <interactant intactId="EBI-12000326">
        <id>P15923-3</id>
        <label>TCF3</label>
    </interactant>
    <organismsDiffer>false</organismsDiffer>
    <experiments>3</experiments>
</comment>
<comment type="interaction">
    <interactant intactId="EBI-1387094">
        <id>Q02535</id>
    </interactant>
    <interactant intactId="EBI-533224">
        <id>P15884</id>
        <label>TCF4</label>
    </interactant>
    <organismsDiffer>false</organismsDiffer>
    <experiments>6</experiments>
</comment>
<comment type="interaction">
    <interactant intactId="EBI-1387094">
        <id>Q02535</id>
    </interactant>
    <interactant intactId="EBI-13636688">
        <id>P15884-3</id>
        <label>TCF4</label>
    </interactant>
    <organismsDiffer>false</organismsDiffer>
    <experiments>3</experiments>
</comment>
<comment type="subcellular location">
    <subcellularLocation>
        <location>Nucleus</location>
    </subcellularLocation>
</comment>
<comment type="tissue specificity">
    <text>Expressed abundantly in lung, kidney and adrenal gland, but not in adult brain.</text>
</comment>
<comment type="induction">
    <text>By phorbol 12-myristate 13-acetate (PMA).</text>
</comment>
<comment type="sequence caution" evidence="11">
    <conflict type="erroneous initiation">
        <sequence resource="EMBL-CDS" id="CAA47360"/>
    </conflict>
    <text>Extended N-terminus.</text>
</comment>
<keyword id="KW-0002">3D-structure</keyword>
<keyword id="KW-0090">Biological rhythms</keyword>
<keyword id="KW-0517">Myogenesis</keyword>
<keyword id="KW-0539">Nucleus</keyword>
<keyword id="KW-1267">Proteomics identification</keyword>
<keyword id="KW-1185">Reference proteome</keyword>
<keyword id="KW-0678">Repressor</keyword>
<keyword id="KW-0804">Transcription</keyword>
<keyword id="KW-0805">Transcription regulation</keyword>
<organism>
    <name type="scientific">Homo sapiens</name>
    <name type="common">Human</name>
    <dbReference type="NCBI Taxonomy" id="9606"/>
    <lineage>
        <taxon>Eukaryota</taxon>
        <taxon>Metazoa</taxon>
        <taxon>Chordata</taxon>
        <taxon>Craniata</taxon>
        <taxon>Vertebrata</taxon>
        <taxon>Euteleostomi</taxon>
        <taxon>Mammalia</taxon>
        <taxon>Eutheria</taxon>
        <taxon>Euarchontoglires</taxon>
        <taxon>Primates</taxon>
        <taxon>Haplorrhini</taxon>
        <taxon>Catarrhini</taxon>
        <taxon>Hominidae</taxon>
        <taxon>Homo</taxon>
    </lineage>
</organism>
<name>ID3_HUMAN</name>
<protein>
    <recommendedName>
        <fullName>DNA-binding protein inhibitor ID-3</fullName>
    </recommendedName>
    <alternativeName>
        <fullName>Class B basic helix-loop-helix protein 25</fullName>
        <shortName>bHLHb25</shortName>
    </alternativeName>
    <alternativeName>
        <fullName>Helix-loop-helix protein HEIR-1</fullName>
    </alternativeName>
    <alternativeName>
        <fullName>ID-like protein inhibitor HLH 1R21</fullName>
    </alternativeName>
    <alternativeName>
        <fullName>Inhibitor of DNA binding 3</fullName>
    </alternativeName>
    <alternativeName>
        <fullName>Inhibitor of differentiation 3</fullName>
    </alternativeName>
</protein>
<dbReference type="EMBL" id="X66924">
    <property type="protein sequence ID" value="CAA47360.1"/>
    <property type="status" value="ALT_INIT"/>
    <property type="molecule type" value="mRNA"/>
</dbReference>
<dbReference type="EMBL" id="X69111">
    <property type="protein sequence ID" value="CAA48862.1"/>
    <property type="molecule type" value="mRNA"/>
</dbReference>
<dbReference type="EMBL" id="X73428">
    <property type="protein sequence ID" value="CAA51827.1"/>
    <property type="molecule type" value="Genomic_DNA"/>
</dbReference>
<dbReference type="EMBL" id="BT006791">
    <property type="protein sequence ID" value="AAP35437.1"/>
    <property type="molecule type" value="mRNA"/>
</dbReference>
<dbReference type="EMBL" id="AK290003">
    <property type="protein sequence ID" value="BAF82692.1"/>
    <property type="molecule type" value="mRNA"/>
</dbReference>
<dbReference type="EMBL" id="AL021154">
    <property type="status" value="NOT_ANNOTATED_CDS"/>
    <property type="molecule type" value="Genomic_DNA"/>
</dbReference>
<dbReference type="EMBL" id="CH471134">
    <property type="protein sequence ID" value="EAW95060.1"/>
    <property type="molecule type" value="Genomic_DNA"/>
</dbReference>
<dbReference type="EMBL" id="BC003107">
    <property type="protein sequence ID" value="AAH03107.1"/>
    <property type="molecule type" value="mRNA"/>
</dbReference>
<dbReference type="CCDS" id="CCDS237.1"/>
<dbReference type="PIR" id="I37092">
    <property type="entry name" value="S28529"/>
</dbReference>
<dbReference type="RefSeq" id="NP_002158.3">
    <property type="nucleotide sequence ID" value="NM_002167.4"/>
</dbReference>
<dbReference type="PDB" id="2LFH">
    <property type="method" value="NMR"/>
    <property type="chains" value="A/B=29-83"/>
</dbReference>
<dbReference type="PDBsum" id="2LFH"/>
<dbReference type="BMRB" id="Q02535"/>
<dbReference type="SMR" id="Q02535"/>
<dbReference type="BioGRID" id="109625">
    <property type="interactions" value="48"/>
</dbReference>
<dbReference type="DIP" id="DIP-713N"/>
<dbReference type="FunCoup" id="Q02535">
    <property type="interactions" value="1403"/>
</dbReference>
<dbReference type="IntAct" id="Q02535">
    <property type="interactions" value="39"/>
</dbReference>
<dbReference type="MINT" id="Q02535"/>
<dbReference type="STRING" id="9606.ENSP00000363689"/>
<dbReference type="GlyGen" id="Q02535">
    <property type="glycosylation" value="1 site, 1 O-linked glycan (1 site)"/>
</dbReference>
<dbReference type="iPTMnet" id="Q02535"/>
<dbReference type="PhosphoSitePlus" id="Q02535"/>
<dbReference type="BioMuta" id="ID3"/>
<dbReference type="DMDM" id="322510035"/>
<dbReference type="jPOST" id="Q02535"/>
<dbReference type="MassIVE" id="Q02535"/>
<dbReference type="PaxDb" id="9606-ENSP00000363689"/>
<dbReference type="PeptideAtlas" id="Q02535"/>
<dbReference type="ProteomicsDB" id="58106"/>
<dbReference type="Pumba" id="Q02535"/>
<dbReference type="Antibodypedia" id="4480">
    <property type="antibodies" value="644 antibodies from 39 providers"/>
</dbReference>
<dbReference type="DNASU" id="3399"/>
<dbReference type="Ensembl" id="ENST00000374561.6">
    <property type="protein sequence ID" value="ENSP00000363689.5"/>
    <property type="gene ID" value="ENSG00000117318.9"/>
</dbReference>
<dbReference type="Ensembl" id="ENST00000634790.2">
    <property type="protein sequence ID" value="ENSP00000489102.1"/>
    <property type="gene ID" value="ENSG00000283060.2"/>
</dbReference>
<dbReference type="GeneID" id="3399"/>
<dbReference type="KEGG" id="hsa:3399"/>
<dbReference type="MANE-Select" id="ENST00000374561.6">
    <property type="protein sequence ID" value="ENSP00000363689.5"/>
    <property type="RefSeq nucleotide sequence ID" value="NM_002167.5"/>
    <property type="RefSeq protein sequence ID" value="NP_002158.3"/>
</dbReference>
<dbReference type="UCSC" id="uc001bhh.5">
    <property type="organism name" value="human"/>
</dbReference>
<dbReference type="AGR" id="HGNC:5362"/>
<dbReference type="CTD" id="3399"/>
<dbReference type="DisGeNET" id="3399"/>
<dbReference type="GeneCards" id="ID3"/>
<dbReference type="HGNC" id="HGNC:5362">
    <property type="gene designation" value="ID3"/>
</dbReference>
<dbReference type="HPA" id="ENSG00000117318">
    <property type="expression patterns" value="Low tissue specificity"/>
</dbReference>
<dbReference type="MalaCards" id="ID3"/>
<dbReference type="MIM" id="600277">
    <property type="type" value="gene"/>
</dbReference>
<dbReference type="neXtProt" id="NX_Q02535"/>
<dbReference type="OpenTargets" id="ENSG00000117318"/>
<dbReference type="PharmGKB" id="PA29610"/>
<dbReference type="VEuPathDB" id="HostDB:ENSG00000117318"/>
<dbReference type="eggNOG" id="ENOG502S53I">
    <property type="taxonomic scope" value="Eukaryota"/>
</dbReference>
<dbReference type="GeneTree" id="ENSGT00940000160504"/>
<dbReference type="HOGENOM" id="CLU_116790_1_0_1"/>
<dbReference type="InParanoid" id="Q02535"/>
<dbReference type="OMA" id="PARGCYE"/>
<dbReference type="OrthoDB" id="10047910at2759"/>
<dbReference type="PAN-GO" id="Q02535">
    <property type="GO annotations" value="5 GO annotations based on evolutionary models"/>
</dbReference>
<dbReference type="PhylomeDB" id="Q02535"/>
<dbReference type="TreeFam" id="TF326217"/>
<dbReference type="PathwayCommons" id="Q02535"/>
<dbReference type="Reactome" id="R-HSA-9031628">
    <property type="pathway name" value="NGF-stimulated transcription"/>
</dbReference>
<dbReference type="SignaLink" id="Q02535"/>
<dbReference type="SIGNOR" id="Q02535"/>
<dbReference type="BioGRID-ORCS" id="3399">
    <property type="hits" value="19 hits in 1182 CRISPR screens"/>
</dbReference>
<dbReference type="ChiTaRS" id="ID3">
    <property type="organism name" value="human"/>
</dbReference>
<dbReference type="EvolutionaryTrace" id="Q02535"/>
<dbReference type="GeneWiki" id="ID3_(gene)"/>
<dbReference type="GenomeRNAi" id="3399"/>
<dbReference type="Pharos" id="Q02535">
    <property type="development level" value="Tbio"/>
</dbReference>
<dbReference type="PRO" id="PR:Q02535"/>
<dbReference type="Proteomes" id="UP000005640">
    <property type="component" value="Chromosome 1"/>
</dbReference>
<dbReference type="RNAct" id="Q02535">
    <property type="molecule type" value="protein"/>
</dbReference>
<dbReference type="Bgee" id="ENSG00000117318">
    <property type="expression patterns" value="Expressed in right lobe of thyroid gland and 97 other cell types or tissues"/>
</dbReference>
<dbReference type="GO" id="GO:0005737">
    <property type="term" value="C:cytoplasm"/>
    <property type="evidence" value="ECO:0007669"/>
    <property type="project" value="Ensembl"/>
</dbReference>
<dbReference type="GO" id="GO:0005654">
    <property type="term" value="C:nucleoplasm"/>
    <property type="evidence" value="ECO:0000304"/>
    <property type="project" value="Reactome"/>
</dbReference>
<dbReference type="GO" id="GO:0005634">
    <property type="term" value="C:nucleus"/>
    <property type="evidence" value="ECO:0000318"/>
    <property type="project" value="GO_Central"/>
</dbReference>
<dbReference type="GO" id="GO:0043425">
    <property type="term" value="F:bHLH transcription factor binding"/>
    <property type="evidence" value="ECO:0007669"/>
    <property type="project" value="Ensembl"/>
</dbReference>
<dbReference type="GO" id="GO:1901707">
    <property type="term" value="F:leptomycin B binding"/>
    <property type="evidence" value="ECO:0007669"/>
    <property type="project" value="Ensembl"/>
</dbReference>
<dbReference type="GO" id="GO:0046983">
    <property type="term" value="F:protein dimerization activity"/>
    <property type="evidence" value="ECO:0007669"/>
    <property type="project" value="InterPro"/>
</dbReference>
<dbReference type="GO" id="GO:0019904">
    <property type="term" value="F:protein domain specific binding"/>
    <property type="evidence" value="ECO:0007669"/>
    <property type="project" value="Ensembl"/>
</dbReference>
<dbReference type="GO" id="GO:0003714">
    <property type="term" value="F:transcription corepressor activity"/>
    <property type="evidence" value="ECO:0000318"/>
    <property type="project" value="GO_Central"/>
</dbReference>
<dbReference type="GO" id="GO:0140416">
    <property type="term" value="F:transcription regulator inhibitor activity"/>
    <property type="evidence" value="ECO:0000304"/>
    <property type="project" value="ARUK-UCL"/>
</dbReference>
<dbReference type="GO" id="GO:0072750">
    <property type="term" value="P:cellular response to leptomycin B"/>
    <property type="evidence" value="ECO:0007669"/>
    <property type="project" value="Ensembl"/>
</dbReference>
<dbReference type="GO" id="GO:0007417">
    <property type="term" value="P:central nervous system development"/>
    <property type="evidence" value="ECO:0007669"/>
    <property type="project" value="Ensembl"/>
</dbReference>
<dbReference type="GO" id="GO:0007623">
    <property type="term" value="P:circadian rhythm"/>
    <property type="evidence" value="ECO:0007669"/>
    <property type="project" value="Ensembl"/>
</dbReference>
<dbReference type="GO" id="GO:0030855">
    <property type="term" value="P:epithelial cell differentiation"/>
    <property type="evidence" value="ECO:0007669"/>
    <property type="project" value="Ensembl"/>
</dbReference>
<dbReference type="GO" id="GO:0007507">
    <property type="term" value="P:heart development"/>
    <property type="evidence" value="ECO:0007669"/>
    <property type="project" value="Ensembl"/>
</dbReference>
<dbReference type="GO" id="GO:0001656">
    <property type="term" value="P:metanephros development"/>
    <property type="evidence" value="ECO:0007669"/>
    <property type="project" value="Ensembl"/>
</dbReference>
<dbReference type="GO" id="GO:0007517">
    <property type="term" value="P:muscle organ development"/>
    <property type="evidence" value="ECO:0007669"/>
    <property type="project" value="UniProtKB-KW"/>
</dbReference>
<dbReference type="GO" id="GO:0043433">
    <property type="term" value="P:negative regulation of DNA-binding transcription factor activity"/>
    <property type="evidence" value="ECO:0000314"/>
    <property type="project" value="GDB"/>
</dbReference>
<dbReference type="GO" id="GO:0045892">
    <property type="term" value="P:negative regulation of DNA-templated transcription"/>
    <property type="evidence" value="ECO:0000314"/>
    <property type="project" value="GDB"/>
</dbReference>
<dbReference type="GO" id="GO:0010629">
    <property type="term" value="P:negative regulation of gene expression"/>
    <property type="evidence" value="ECO:0007669"/>
    <property type="project" value="Ensembl"/>
</dbReference>
<dbReference type="GO" id="GO:0045662">
    <property type="term" value="P:negative regulation of myoblast differentiation"/>
    <property type="evidence" value="ECO:0007669"/>
    <property type="project" value="Ensembl"/>
</dbReference>
<dbReference type="GO" id="GO:0045668">
    <property type="term" value="P:negative regulation of osteoblast differentiation"/>
    <property type="evidence" value="ECO:0007669"/>
    <property type="project" value="Ensembl"/>
</dbReference>
<dbReference type="GO" id="GO:0000122">
    <property type="term" value="P:negative regulation of transcription by RNA polymerase II"/>
    <property type="evidence" value="ECO:0000318"/>
    <property type="project" value="GO_Central"/>
</dbReference>
<dbReference type="GO" id="GO:0030182">
    <property type="term" value="P:neuron differentiation"/>
    <property type="evidence" value="ECO:0000318"/>
    <property type="project" value="GO_Central"/>
</dbReference>
<dbReference type="GO" id="GO:0030903">
    <property type="term" value="P:notochord development"/>
    <property type="evidence" value="ECO:0007669"/>
    <property type="project" value="Ensembl"/>
</dbReference>
<dbReference type="GO" id="GO:0042476">
    <property type="term" value="P:odontogenesis"/>
    <property type="evidence" value="ECO:0007669"/>
    <property type="project" value="Ensembl"/>
</dbReference>
<dbReference type="GO" id="GO:0043065">
    <property type="term" value="P:positive regulation of apoptotic process"/>
    <property type="evidence" value="ECO:0007669"/>
    <property type="project" value="Ensembl"/>
</dbReference>
<dbReference type="GO" id="GO:0010628">
    <property type="term" value="P:positive regulation of gene expression"/>
    <property type="evidence" value="ECO:0007669"/>
    <property type="project" value="Ensembl"/>
</dbReference>
<dbReference type="GO" id="GO:0006275">
    <property type="term" value="P:regulation of DNA replication"/>
    <property type="evidence" value="ECO:0007669"/>
    <property type="project" value="Ensembl"/>
</dbReference>
<dbReference type="CDD" id="cd19693">
    <property type="entry name" value="bHLH_dnHLH_ID3"/>
    <property type="match status" value="1"/>
</dbReference>
<dbReference type="FunFam" id="4.10.280.10:FF:000039">
    <property type="entry name" value="DNA-binding protein inhibitor ID-3"/>
    <property type="match status" value="1"/>
</dbReference>
<dbReference type="Gene3D" id="4.10.280.10">
    <property type="entry name" value="Helix-loop-helix DNA-binding domain"/>
    <property type="match status" value="1"/>
</dbReference>
<dbReference type="InterPro" id="IPR011598">
    <property type="entry name" value="bHLH_dom"/>
</dbReference>
<dbReference type="InterPro" id="IPR026052">
    <property type="entry name" value="DNA-bd_prot-inh"/>
</dbReference>
<dbReference type="InterPro" id="IPR036638">
    <property type="entry name" value="HLH_DNA-bd_sf"/>
</dbReference>
<dbReference type="PANTHER" id="PTHR11723">
    <property type="entry name" value="DNA-BINDING PROTEIN INHIBITOR"/>
    <property type="match status" value="1"/>
</dbReference>
<dbReference type="PANTHER" id="PTHR11723:SF16">
    <property type="entry name" value="DNA-BINDING PROTEIN INHIBITOR ID-3"/>
    <property type="match status" value="1"/>
</dbReference>
<dbReference type="Pfam" id="PF00010">
    <property type="entry name" value="HLH"/>
    <property type="match status" value="1"/>
</dbReference>
<dbReference type="SMART" id="SM00353">
    <property type="entry name" value="HLH"/>
    <property type="match status" value="1"/>
</dbReference>
<dbReference type="SUPFAM" id="SSF47459">
    <property type="entry name" value="HLH, helix-loop-helix DNA-binding domain"/>
    <property type="match status" value="1"/>
</dbReference>
<dbReference type="PROSITE" id="PS50888">
    <property type="entry name" value="BHLH"/>
    <property type="match status" value="1"/>
</dbReference>
<gene>
    <name type="primary">ID3</name>
    <name type="synonym">1R21</name>
    <name type="synonym">BHLHB25</name>
    <name type="synonym">HEIR1</name>
</gene>
<proteinExistence type="evidence at protein level"/>
<sequence length="119" mass="12999">MKALSPVRGCYEAVCCLSERSLAIARGRGKGPAAEEPLSLLDDMNHCYSRLRELVPGVPRGTQLSQVEILQRVIDYILDLQVVLAEPAPGPPDGPHLPIQTAELTPELVISNDKRSFCH</sequence>
<reference key="1">
    <citation type="journal article" date="1992" name="EMBO J.">
        <title>Mutually exclusive expression of a helix-loop-helix gene and N-myc in human neuroblastomas and in normal development.</title>
        <authorList>
            <person name="Ellmeier W."/>
            <person name="Aguzzi A."/>
            <person name="Kleiner E."/>
            <person name="Kurzbauer R."/>
            <person name="Weith A."/>
        </authorList>
    </citation>
    <scope>NUCLEOTIDE SEQUENCE [MRNA]</scope>
    <scope>VARIANT ALA-105</scope>
</reference>
<reference key="2">
    <citation type="journal article" date="1993" name="Oncogene">
        <title>An immediate early human gene encodes an Id-like helix-loop-helix protein and is regulated by protein kinase C activation in diverse cell types.</title>
        <authorList>
            <person name="Deed R.W."/>
            <person name="Bianchi S.M."/>
            <person name="Atherton G.T."/>
            <person name="Johnston D."/>
            <person name="Santibanez-Koref M."/>
            <person name="Murphy J.J."/>
            <person name="Norton J.D."/>
        </authorList>
    </citation>
    <scope>NUCLEOTIDE SEQUENCE [MRNA]</scope>
    <scope>FUNCTION</scope>
    <scope>VARIANT ALA-105</scope>
</reference>
<reference key="3">
    <citation type="journal article" date="1994" name="Gene">
        <title>Structural organisation and chromosomal mapping of the human Id-3 gene.</title>
        <authorList>
            <person name="Deed R.W."/>
            <person name="Hirose T."/>
            <person name="Mitchell E.L.D."/>
            <person name="Santibanez-Koref M.F."/>
            <person name="Norton J.D."/>
        </authorList>
    </citation>
    <scope>NUCLEOTIDE SEQUENCE [GENOMIC DNA]</scope>
    <scope>VARIANT ALA-105</scope>
    <source>
        <tissue>Blood</tissue>
    </source>
</reference>
<reference key="4">
    <citation type="submission" date="2004-10" db="EMBL/GenBank/DDBJ databases">
        <title>Cloning of human full-length CDSs in BD Creator(TM) system donor vector.</title>
        <authorList>
            <person name="Kalnine N."/>
            <person name="Chen X."/>
            <person name="Rolfs A."/>
            <person name="Halleck A."/>
            <person name="Hines L."/>
            <person name="Eisenstein S."/>
            <person name="Koundinya M."/>
            <person name="Raphael J."/>
            <person name="Moreira D."/>
            <person name="Kelley T."/>
            <person name="LaBaer J."/>
            <person name="Lin Y."/>
            <person name="Phelan M."/>
            <person name="Farmer A."/>
        </authorList>
    </citation>
    <scope>NUCLEOTIDE SEQUENCE [LARGE SCALE MRNA]</scope>
    <scope>VARIANT ALA-105</scope>
</reference>
<reference key="5">
    <citation type="journal article" date="2004" name="Nat. Genet.">
        <title>Complete sequencing and characterization of 21,243 full-length human cDNAs.</title>
        <authorList>
            <person name="Ota T."/>
            <person name="Suzuki Y."/>
            <person name="Nishikawa T."/>
            <person name="Otsuki T."/>
            <person name="Sugiyama T."/>
            <person name="Irie R."/>
            <person name="Wakamatsu A."/>
            <person name="Hayashi K."/>
            <person name="Sato H."/>
            <person name="Nagai K."/>
            <person name="Kimura K."/>
            <person name="Makita H."/>
            <person name="Sekine M."/>
            <person name="Obayashi M."/>
            <person name="Nishi T."/>
            <person name="Shibahara T."/>
            <person name="Tanaka T."/>
            <person name="Ishii S."/>
            <person name="Yamamoto J."/>
            <person name="Saito K."/>
            <person name="Kawai Y."/>
            <person name="Isono Y."/>
            <person name="Nakamura Y."/>
            <person name="Nagahari K."/>
            <person name="Murakami K."/>
            <person name="Yasuda T."/>
            <person name="Iwayanagi T."/>
            <person name="Wagatsuma M."/>
            <person name="Shiratori A."/>
            <person name="Sudo H."/>
            <person name="Hosoiri T."/>
            <person name="Kaku Y."/>
            <person name="Kodaira H."/>
            <person name="Kondo H."/>
            <person name="Sugawara M."/>
            <person name="Takahashi M."/>
            <person name="Kanda K."/>
            <person name="Yokoi T."/>
            <person name="Furuya T."/>
            <person name="Kikkawa E."/>
            <person name="Omura Y."/>
            <person name="Abe K."/>
            <person name="Kamihara K."/>
            <person name="Katsuta N."/>
            <person name="Sato K."/>
            <person name="Tanikawa M."/>
            <person name="Yamazaki M."/>
            <person name="Ninomiya K."/>
            <person name="Ishibashi T."/>
            <person name="Yamashita H."/>
            <person name="Murakawa K."/>
            <person name="Fujimori K."/>
            <person name="Tanai H."/>
            <person name="Kimata M."/>
            <person name="Watanabe M."/>
            <person name="Hiraoka S."/>
            <person name="Chiba Y."/>
            <person name="Ishida S."/>
            <person name="Ono Y."/>
            <person name="Takiguchi S."/>
            <person name="Watanabe S."/>
            <person name="Yosida M."/>
            <person name="Hotuta T."/>
            <person name="Kusano J."/>
            <person name="Kanehori K."/>
            <person name="Takahashi-Fujii A."/>
            <person name="Hara H."/>
            <person name="Tanase T.-O."/>
            <person name="Nomura Y."/>
            <person name="Togiya S."/>
            <person name="Komai F."/>
            <person name="Hara R."/>
            <person name="Takeuchi K."/>
            <person name="Arita M."/>
            <person name="Imose N."/>
            <person name="Musashino K."/>
            <person name="Yuuki H."/>
            <person name="Oshima A."/>
            <person name="Sasaki N."/>
            <person name="Aotsuka S."/>
            <person name="Yoshikawa Y."/>
            <person name="Matsunawa H."/>
            <person name="Ichihara T."/>
            <person name="Shiohata N."/>
            <person name="Sano S."/>
            <person name="Moriya S."/>
            <person name="Momiyama H."/>
            <person name="Satoh N."/>
            <person name="Takami S."/>
            <person name="Terashima Y."/>
            <person name="Suzuki O."/>
            <person name="Nakagawa S."/>
            <person name="Senoh A."/>
            <person name="Mizoguchi H."/>
            <person name="Goto Y."/>
            <person name="Shimizu F."/>
            <person name="Wakebe H."/>
            <person name="Hishigaki H."/>
            <person name="Watanabe T."/>
            <person name="Sugiyama A."/>
            <person name="Takemoto M."/>
            <person name="Kawakami B."/>
            <person name="Yamazaki M."/>
            <person name="Watanabe K."/>
            <person name="Kumagai A."/>
            <person name="Itakura S."/>
            <person name="Fukuzumi Y."/>
            <person name="Fujimori Y."/>
            <person name="Komiyama M."/>
            <person name="Tashiro H."/>
            <person name="Tanigami A."/>
            <person name="Fujiwara T."/>
            <person name="Ono T."/>
            <person name="Yamada K."/>
            <person name="Fujii Y."/>
            <person name="Ozaki K."/>
            <person name="Hirao M."/>
            <person name="Ohmori Y."/>
            <person name="Kawabata A."/>
            <person name="Hikiji T."/>
            <person name="Kobatake N."/>
            <person name="Inagaki H."/>
            <person name="Ikema Y."/>
            <person name="Okamoto S."/>
            <person name="Okitani R."/>
            <person name="Kawakami T."/>
            <person name="Noguchi S."/>
            <person name="Itoh T."/>
            <person name="Shigeta K."/>
            <person name="Senba T."/>
            <person name="Matsumura K."/>
            <person name="Nakajima Y."/>
            <person name="Mizuno T."/>
            <person name="Morinaga M."/>
            <person name="Sasaki M."/>
            <person name="Togashi T."/>
            <person name="Oyama M."/>
            <person name="Hata H."/>
            <person name="Watanabe M."/>
            <person name="Komatsu T."/>
            <person name="Mizushima-Sugano J."/>
            <person name="Satoh T."/>
            <person name="Shirai Y."/>
            <person name="Takahashi Y."/>
            <person name="Nakagawa K."/>
            <person name="Okumura K."/>
            <person name="Nagase T."/>
            <person name="Nomura N."/>
            <person name="Kikuchi H."/>
            <person name="Masuho Y."/>
            <person name="Yamashita R."/>
            <person name="Nakai K."/>
            <person name="Yada T."/>
            <person name="Nakamura Y."/>
            <person name="Ohara O."/>
            <person name="Isogai T."/>
            <person name="Sugano S."/>
        </authorList>
    </citation>
    <scope>NUCLEOTIDE SEQUENCE [LARGE SCALE MRNA]</scope>
    <scope>VARIANT ALA-105</scope>
    <source>
        <tissue>Hippocampus</tissue>
    </source>
</reference>
<reference key="6">
    <citation type="journal article" date="2006" name="Nature">
        <title>The DNA sequence and biological annotation of human chromosome 1.</title>
        <authorList>
            <person name="Gregory S.G."/>
            <person name="Barlow K.F."/>
            <person name="McLay K.E."/>
            <person name="Kaul R."/>
            <person name="Swarbreck D."/>
            <person name="Dunham A."/>
            <person name="Scott C.E."/>
            <person name="Howe K.L."/>
            <person name="Woodfine K."/>
            <person name="Spencer C.C.A."/>
            <person name="Jones M.C."/>
            <person name="Gillson C."/>
            <person name="Searle S."/>
            <person name="Zhou Y."/>
            <person name="Kokocinski F."/>
            <person name="McDonald L."/>
            <person name="Evans R."/>
            <person name="Phillips K."/>
            <person name="Atkinson A."/>
            <person name="Cooper R."/>
            <person name="Jones C."/>
            <person name="Hall R.E."/>
            <person name="Andrews T.D."/>
            <person name="Lloyd C."/>
            <person name="Ainscough R."/>
            <person name="Almeida J.P."/>
            <person name="Ambrose K.D."/>
            <person name="Anderson F."/>
            <person name="Andrew R.W."/>
            <person name="Ashwell R.I.S."/>
            <person name="Aubin K."/>
            <person name="Babbage A.K."/>
            <person name="Bagguley C.L."/>
            <person name="Bailey J."/>
            <person name="Beasley H."/>
            <person name="Bethel G."/>
            <person name="Bird C.P."/>
            <person name="Bray-Allen S."/>
            <person name="Brown J.Y."/>
            <person name="Brown A.J."/>
            <person name="Buckley D."/>
            <person name="Burton J."/>
            <person name="Bye J."/>
            <person name="Carder C."/>
            <person name="Chapman J.C."/>
            <person name="Clark S.Y."/>
            <person name="Clarke G."/>
            <person name="Clee C."/>
            <person name="Cobley V."/>
            <person name="Collier R.E."/>
            <person name="Corby N."/>
            <person name="Coville G.J."/>
            <person name="Davies J."/>
            <person name="Deadman R."/>
            <person name="Dunn M."/>
            <person name="Earthrowl M."/>
            <person name="Ellington A.G."/>
            <person name="Errington H."/>
            <person name="Frankish A."/>
            <person name="Frankland J."/>
            <person name="French L."/>
            <person name="Garner P."/>
            <person name="Garnett J."/>
            <person name="Gay L."/>
            <person name="Ghori M.R.J."/>
            <person name="Gibson R."/>
            <person name="Gilby L.M."/>
            <person name="Gillett W."/>
            <person name="Glithero R.J."/>
            <person name="Grafham D.V."/>
            <person name="Griffiths C."/>
            <person name="Griffiths-Jones S."/>
            <person name="Grocock R."/>
            <person name="Hammond S."/>
            <person name="Harrison E.S.I."/>
            <person name="Hart E."/>
            <person name="Haugen E."/>
            <person name="Heath P.D."/>
            <person name="Holmes S."/>
            <person name="Holt K."/>
            <person name="Howden P.J."/>
            <person name="Hunt A.R."/>
            <person name="Hunt S.E."/>
            <person name="Hunter G."/>
            <person name="Isherwood J."/>
            <person name="James R."/>
            <person name="Johnson C."/>
            <person name="Johnson D."/>
            <person name="Joy A."/>
            <person name="Kay M."/>
            <person name="Kershaw J.K."/>
            <person name="Kibukawa M."/>
            <person name="Kimberley A.M."/>
            <person name="King A."/>
            <person name="Knights A.J."/>
            <person name="Lad H."/>
            <person name="Laird G."/>
            <person name="Lawlor S."/>
            <person name="Leongamornlert D.A."/>
            <person name="Lloyd D.M."/>
            <person name="Loveland J."/>
            <person name="Lovell J."/>
            <person name="Lush M.J."/>
            <person name="Lyne R."/>
            <person name="Martin S."/>
            <person name="Mashreghi-Mohammadi M."/>
            <person name="Matthews L."/>
            <person name="Matthews N.S.W."/>
            <person name="McLaren S."/>
            <person name="Milne S."/>
            <person name="Mistry S."/>
            <person name="Moore M.J.F."/>
            <person name="Nickerson T."/>
            <person name="O'Dell C.N."/>
            <person name="Oliver K."/>
            <person name="Palmeiri A."/>
            <person name="Palmer S.A."/>
            <person name="Parker A."/>
            <person name="Patel D."/>
            <person name="Pearce A.V."/>
            <person name="Peck A.I."/>
            <person name="Pelan S."/>
            <person name="Phelps K."/>
            <person name="Phillimore B.J."/>
            <person name="Plumb R."/>
            <person name="Rajan J."/>
            <person name="Raymond C."/>
            <person name="Rouse G."/>
            <person name="Saenphimmachak C."/>
            <person name="Sehra H.K."/>
            <person name="Sheridan E."/>
            <person name="Shownkeen R."/>
            <person name="Sims S."/>
            <person name="Skuce C.D."/>
            <person name="Smith M."/>
            <person name="Steward C."/>
            <person name="Subramanian S."/>
            <person name="Sycamore N."/>
            <person name="Tracey A."/>
            <person name="Tromans A."/>
            <person name="Van Helmond Z."/>
            <person name="Wall M."/>
            <person name="Wallis J.M."/>
            <person name="White S."/>
            <person name="Whitehead S.L."/>
            <person name="Wilkinson J.E."/>
            <person name="Willey D.L."/>
            <person name="Williams H."/>
            <person name="Wilming L."/>
            <person name="Wray P.W."/>
            <person name="Wu Z."/>
            <person name="Coulson A."/>
            <person name="Vaudin M."/>
            <person name="Sulston J.E."/>
            <person name="Durbin R.M."/>
            <person name="Hubbard T."/>
            <person name="Wooster R."/>
            <person name="Dunham I."/>
            <person name="Carter N.P."/>
            <person name="McVean G."/>
            <person name="Ross M.T."/>
            <person name="Harrow J."/>
            <person name="Olson M.V."/>
            <person name="Beck S."/>
            <person name="Rogers J."/>
            <person name="Bentley D.R."/>
        </authorList>
    </citation>
    <scope>NUCLEOTIDE SEQUENCE [LARGE SCALE GENOMIC DNA]</scope>
</reference>
<reference key="7">
    <citation type="submission" date="2005-07" db="EMBL/GenBank/DDBJ databases">
        <authorList>
            <person name="Mural R.J."/>
            <person name="Istrail S."/>
            <person name="Sutton G.G."/>
            <person name="Florea L."/>
            <person name="Halpern A.L."/>
            <person name="Mobarry C.M."/>
            <person name="Lippert R."/>
            <person name="Walenz B."/>
            <person name="Shatkay H."/>
            <person name="Dew I."/>
            <person name="Miller J.R."/>
            <person name="Flanigan M.J."/>
            <person name="Edwards N.J."/>
            <person name="Bolanos R."/>
            <person name="Fasulo D."/>
            <person name="Halldorsson B.V."/>
            <person name="Hannenhalli S."/>
            <person name="Turner R."/>
            <person name="Yooseph S."/>
            <person name="Lu F."/>
            <person name="Nusskern D.R."/>
            <person name="Shue B.C."/>
            <person name="Zheng X.H."/>
            <person name="Zhong F."/>
            <person name="Delcher A.L."/>
            <person name="Huson D.H."/>
            <person name="Kravitz S.A."/>
            <person name="Mouchard L."/>
            <person name="Reinert K."/>
            <person name="Remington K.A."/>
            <person name="Clark A.G."/>
            <person name="Waterman M.S."/>
            <person name="Eichler E.E."/>
            <person name="Adams M.D."/>
            <person name="Hunkapiller M.W."/>
            <person name="Myers E.W."/>
            <person name="Venter J.C."/>
        </authorList>
    </citation>
    <scope>NUCLEOTIDE SEQUENCE [LARGE SCALE GENOMIC DNA]</scope>
    <scope>VARIANT ALA-105</scope>
</reference>
<reference key="8">
    <citation type="journal article" date="2004" name="Genome Res.">
        <title>The status, quality, and expansion of the NIH full-length cDNA project: the Mammalian Gene Collection (MGC).</title>
        <authorList>
            <consortium name="The MGC Project Team"/>
        </authorList>
    </citation>
    <scope>NUCLEOTIDE SEQUENCE [LARGE SCALE MRNA]</scope>
    <scope>VARIANT ALA-105</scope>
    <source>
        <tissue>Skin</tissue>
    </source>
</reference>
<reference key="9">
    <citation type="journal article" date="2010" name="J. Biol. Chem.">
        <title>The transcriptional repressor ID2 can interact with the canonical clock components CLOCK and BMAL1 and mediate inhibitory effects on mPer1 expression.</title>
        <authorList>
            <person name="Ward S.M."/>
            <person name="Fernando S.J."/>
            <person name="Hou T.Y."/>
            <person name="Duffield G.E."/>
        </authorList>
    </citation>
    <scope>INTERACTION WITH CLOCK AND BMAL1</scope>
</reference>
<reference key="10">
    <citation type="journal article" date="2012" name="Proc. Natl. Acad. Sci. U.S.A.">
        <title>N-terminal acetylome analyses and functional insights of the N-terminal acetyltransferase NatB.</title>
        <authorList>
            <person name="Van Damme P."/>
            <person name="Lasa M."/>
            <person name="Polevoda B."/>
            <person name="Gazquez C."/>
            <person name="Elosegui-Artola A."/>
            <person name="Kim D.S."/>
            <person name="De Juan-Pardo E."/>
            <person name="Demeyer K."/>
            <person name="Hole K."/>
            <person name="Larrea E."/>
            <person name="Timmerman E."/>
            <person name="Prieto J."/>
            <person name="Arnesen T."/>
            <person name="Sherman F."/>
            <person name="Gevaert K."/>
            <person name="Aldabe R."/>
        </authorList>
    </citation>
    <scope>IDENTIFICATION BY MASS SPECTROMETRY [LARGE SCALE ANALYSIS]</scope>
</reference>
<accession>Q02535</accession>
<accession>A8K1T8</accession>
<accession>O75641</accession>